<dbReference type="EMBL" id="AM902716">
    <property type="protein sequence ID" value="CAP43019.1"/>
    <property type="molecule type" value="Genomic_DNA"/>
</dbReference>
<dbReference type="SMR" id="A9IQ52"/>
<dbReference type="STRING" id="94624.Bpet2677"/>
<dbReference type="KEGG" id="bpt:Bpet2677"/>
<dbReference type="eggNOG" id="COG0268">
    <property type="taxonomic scope" value="Bacteria"/>
</dbReference>
<dbReference type="Proteomes" id="UP000001225">
    <property type="component" value="Chromosome"/>
</dbReference>
<dbReference type="GO" id="GO:0005829">
    <property type="term" value="C:cytosol"/>
    <property type="evidence" value="ECO:0007669"/>
    <property type="project" value="TreeGrafter"/>
</dbReference>
<dbReference type="GO" id="GO:0015935">
    <property type="term" value="C:small ribosomal subunit"/>
    <property type="evidence" value="ECO:0007669"/>
    <property type="project" value="TreeGrafter"/>
</dbReference>
<dbReference type="GO" id="GO:0070181">
    <property type="term" value="F:small ribosomal subunit rRNA binding"/>
    <property type="evidence" value="ECO:0007669"/>
    <property type="project" value="TreeGrafter"/>
</dbReference>
<dbReference type="GO" id="GO:0003735">
    <property type="term" value="F:structural constituent of ribosome"/>
    <property type="evidence" value="ECO:0007669"/>
    <property type="project" value="InterPro"/>
</dbReference>
<dbReference type="GO" id="GO:0006412">
    <property type="term" value="P:translation"/>
    <property type="evidence" value="ECO:0007669"/>
    <property type="project" value="UniProtKB-UniRule"/>
</dbReference>
<dbReference type="FunFam" id="1.20.58.110:FF:000001">
    <property type="entry name" value="30S ribosomal protein S20"/>
    <property type="match status" value="1"/>
</dbReference>
<dbReference type="Gene3D" id="1.20.58.110">
    <property type="entry name" value="Ribosomal protein S20"/>
    <property type="match status" value="1"/>
</dbReference>
<dbReference type="HAMAP" id="MF_00500">
    <property type="entry name" value="Ribosomal_bS20"/>
    <property type="match status" value="1"/>
</dbReference>
<dbReference type="InterPro" id="IPR002583">
    <property type="entry name" value="Ribosomal_bS20"/>
</dbReference>
<dbReference type="InterPro" id="IPR036510">
    <property type="entry name" value="Ribosomal_bS20_sf"/>
</dbReference>
<dbReference type="NCBIfam" id="TIGR00029">
    <property type="entry name" value="S20"/>
    <property type="match status" value="1"/>
</dbReference>
<dbReference type="PANTHER" id="PTHR33398">
    <property type="entry name" value="30S RIBOSOMAL PROTEIN S20"/>
    <property type="match status" value="1"/>
</dbReference>
<dbReference type="PANTHER" id="PTHR33398:SF1">
    <property type="entry name" value="SMALL RIBOSOMAL SUBUNIT PROTEIN BS20C"/>
    <property type="match status" value="1"/>
</dbReference>
<dbReference type="Pfam" id="PF01649">
    <property type="entry name" value="Ribosomal_S20p"/>
    <property type="match status" value="1"/>
</dbReference>
<dbReference type="SUPFAM" id="SSF46992">
    <property type="entry name" value="Ribosomal protein S20"/>
    <property type="match status" value="1"/>
</dbReference>
<keyword id="KW-0687">Ribonucleoprotein</keyword>
<keyword id="KW-0689">Ribosomal protein</keyword>
<keyword id="KW-0694">RNA-binding</keyword>
<keyword id="KW-0699">rRNA-binding</keyword>
<gene>
    <name evidence="1" type="primary">rpsT</name>
    <name type="ordered locus">Bpet2677</name>
</gene>
<organism>
    <name type="scientific">Bordetella petrii (strain ATCC BAA-461 / DSM 12804 / CCUG 43448)</name>
    <dbReference type="NCBI Taxonomy" id="340100"/>
    <lineage>
        <taxon>Bacteria</taxon>
        <taxon>Pseudomonadati</taxon>
        <taxon>Pseudomonadota</taxon>
        <taxon>Betaproteobacteria</taxon>
        <taxon>Burkholderiales</taxon>
        <taxon>Alcaligenaceae</taxon>
        <taxon>Bordetella</taxon>
    </lineage>
</organism>
<reference key="1">
    <citation type="journal article" date="2008" name="BMC Genomics">
        <title>The missing link: Bordetella petrii is endowed with both the metabolic versatility of environmental bacteria and virulence traits of pathogenic Bordetellae.</title>
        <authorList>
            <person name="Gross R."/>
            <person name="Guzman C.A."/>
            <person name="Sebaihia M."/>
            <person name="Martin dos Santos V.A.P."/>
            <person name="Pieper D.H."/>
            <person name="Koebnik R."/>
            <person name="Lechner M."/>
            <person name="Bartels D."/>
            <person name="Buhrmester J."/>
            <person name="Choudhuri J.V."/>
            <person name="Ebensen T."/>
            <person name="Gaigalat L."/>
            <person name="Herrmann S."/>
            <person name="Khachane A.N."/>
            <person name="Larisch C."/>
            <person name="Link S."/>
            <person name="Linke B."/>
            <person name="Meyer F."/>
            <person name="Mormann S."/>
            <person name="Nakunst D."/>
            <person name="Rueckert C."/>
            <person name="Schneiker-Bekel S."/>
            <person name="Schulze K."/>
            <person name="Voerholter F.-J."/>
            <person name="Yevsa T."/>
            <person name="Engle J.T."/>
            <person name="Goldman W.E."/>
            <person name="Puehler A."/>
            <person name="Goebel U.B."/>
            <person name="Goesmann A."/>
            <person name="Bloecker H."/>
            <person name="Kaiser O."/>
            <person name="Martinez-Arias R."/>
        </authorList>
    </citation>
    <scope>NUCLEOTIDE SEQUENCE [LARGE SCALE GENOMIC DNA]</scope>
    <source>
        <strain>ATCC BAA-461 / DSM 12804 / CCUG 43448</strain>
    </source>
</reference>
<accession>A9IQ52</accession>
<proteinExistence type="inferred from homology"/>
<evidence type="ECO:0000255" key="1">
    <source>
        <dbReference type="HAMAP-Rule" id="MF_00500"/>
    </source>
</evidence>
<evidence type="ECO:0000256" key="2">
    <source>
        <dbReference type="SAM" id="MobiDB-lite"/>
    </source>
</evidence>
<evidence type="ECO:0000305" key="3"/>
<name>RS20_BORPD</name>
<sequence length="87" mass="9560">MANTAQARKRARQSVERNKHNSSLRSMLRTAIKRVRQSIAAGDKAAASEVFQKATSVIDRVADKNIIHKNKAARHKSRLAAAIKALA</sequence>
<comment type="function">
    <text evidence="1">Binds directly to 16S ribosomal RNA.</text>
</comment>
<comment type="similarity">
    <text evidence="1">Belongs to the bacterial ribosomal protein bS20 family.</text>
</comment>
<protein>
    <recommendedName>
        <fullName evidence="1">Small ribosomal subunit protein bS20</fullName>
    </recommendedName>
    <alternativeName>
        <fullName evidence="3">30S ribosomal protein S20</fullName>
    </alternativeName>
</protein>
<feature type="chain" id="PRO_1000126406" description="Small ribosomal subunit protein bS20">
    <location>
        <begin position="1"/>
        <end position="87"/>
    </location>
</feature>
<feature type="region of interest" description="Disordered" evidence="2">
    <location>
        <begin position="1"/>
        <end position="24"/>
    </location>
</feature>